<reference key="1">
    <citation type="journal article" date="2003" name="Nat. Genet.">
        <title>Comparative analysis of the genome sequences of Bordetella pertussis, Bordetella parapertussis and Bordetella bronchiseptica.</title>
        <authorList>
            <person name="Parkhill J."/>
            <person name="Sebaihia M."/>
            <person name="Preston A."/>
            <person name="Murphy L.D."/>
            <person name="Thomson N.R."/>
            <person name="Harris D.E."/>
            <person name="Holden M.T.G."/>
            <person name="Churcher C.M."/>
            <person name="Bentley S.D."/>
            <person name="Mungall K.L."/>
            <person name="Cerdeno-Tarraga A.-M."/>
            <person name="Temple L."/>
            <person name="James K.D."/>
            <person name="Harris B."/>
            <person name="Quail M.A."/>
            <person name="Achtman M."/>
            <person name="Atkin R."/>
            <person name="Baker S."/>
            <person name="Basham D."/>
            <person name="Bason N."/>
            <person name="Cherevach I."/>
            <person name="Chillingworth T."/>
            <person name="Collins M."/>
            <person name="Cronin A."/>
            <person name="Davis P."/>
            <person name="Doggett J."/>
            <person name="Feltwell T."/>
            <person name="Goble A."/>
            <person name="Hamlin N."/>
            <person name="Hauser H."/>
            <person name="Holroyd S."/>
            <person name="Jagels K."/>
            <person name="Leather S."/>
            <person name="Moule S."/>
            <person name="Norberczak H."/>
            <person name="O'Neil S."/>
            <person name="Ormond D."/>
            <person name="Price C."/>
            <person name="Rabbinowitsch E."/>
            <person name="Rutter S."/>
            <person name="Sanders M."/>
            <person name="Saunders D."/>
            <person name="Seeger K."/>
            <person name="Sharp S."/>
            <person name="Simmonds M."/>
            <person name="Skelton J."/>
            <person name="Squares R."/>
            <person name="Squares S."/>
            <person name="Stevens K."/>
            <person name="Unwin L."/>
            <person name="Whitehead S."/>
            <person name="Barrell B.G."/>
            <person name="Maskell D.J."/>
        </authorList>
    </citation>
    <scope>NUCLEOTIDE SEQUENCE [LARGE SCALE GENOMIC DNA]</scope>
    <source>
        <strain>ATCC BAA-588 / NCTC 13252 / RB50</strain>
    </source>
</reference>
<protein>
    <recommendedName>
        <fullName evidence="1">Ribonuclease HII</fullName>
        <shortName evidence="1">RNase HII</shortName>
        <ecNumber evidence="1">3.1.26.4</ecNumber>
    </recommendedName>
</protein>
<organism>
    <name type="scientific">Bordetella bronchiseptica (strain ATCC BAA-588 / NCTC 13252 / RB50)</name>
    <name type="common">Alcaligenes bronchisepticus</name>
    <dbReference type="NCBI Taxonomy" id="257310"/>
    <lineage>
        <taxon>Bacteria</taxon>
        <taxon>Pseudomonadati</taxon>
        <taxon>Pseudomonadota</taxon>
        <taxon>Betaproteobacteria</taxon>
        <taxon>Burkholderiales</taxon>
        <taxon>Alcaligenaceae</taxon>
        <taxon>Bordetella</taxon>
    </lineage>
</organism>
<name>RNH2_BORBR</name>
<dbReference type="EC" id="3.1.26.4" evidence="1"/>
<dbReference type="EMBL" id="BX640444">
    <property type="protein sequence ID" value="CAE33112.1"/>
    <property type="molecule type" value="Genomic_DNA"/>
</dbReference>
<dbReference type="RefSeq" id="WP_003811770.1">
    <property type="nucleotide sequence ID" value="NC_002927.3"/>
</dbReference>
<dbReference type="SMR" id="Q7WJ80"/>
<dbReference type="GeneID" id="93203300"/>
<dbReference type="KEGG" id="bbr:BB2619"/>
<dbReference type="eggNOG" id="COG0164">
    <property type="taxonomic scope" value="Bacteria"/>
</dbReference>
<dbReference type="HOGENOM" id="CLU_036532_3_2_4"/>
<dbReference type="Proteomes" id="UP000001027">
    <property type="component" value="Chromosome"/>
</dbReference>
<dbReference type="GO" id="GO:0005737">
    <property type="term" value="C:cytoplasm"/>
    <property type="evidence" value="ECO:0007669"/>
    <property type="project" value="UniProtKB-SubCell"/>
</dbReference>
<dbReference type="GO" id="GO:0032299">
    <property type="term" value="C:ribonuclease H2 complex"/>
    <property type="evidence" value="ECO:0007669"/>
    <property type="project" value="TreeGrafter"/>
</dbReference>
<dbReference type="GO" id="GO:0030145">
    <property type="term" value="F:manganese ion binding"/>
    <property type="evidence" value="ECO:0007669"/>
    <property type="project" value="UniProtKB-UniRule"/>
</dbReference>
<dbReference type="GO" id="GO:0003723">
    <property type="term" value="F:RNA binding"/>
    <property type="evidence" value="ECO:0007669"/>
    <property type="project" value="InterPro"/>
</dbReference>
<dbReference type="GO" id="GO:0004523">
    <property type="term" value="F:RNA-DNA hybrid ribonuclease activity"/>
    <property type="evidence" value="ECO:0007669"/>
    <property type="project" value="UniProtKB-UniRule"/>
</dbReference>
<dbReference type="GO" id="GO:0043137">
    <property type="term" value="P:DNA replication, removal of RNA primer"/>
    <property type="evidence" value="ECO:0007669"/>
    <property type="project" value="TreeGrafter"/>
</dbReference>
<dbReference type="GO" id="GO:0006298">
    <property type="term" value="P:mismatch repair"/>
    <property type="evidence" value="ECO:0007669"/>
    <property type="project" value="TreeGrafter"/>
</dbReference>
<dbReference type="CDD" id="cd07182">
    <property type="entry name" value="RNase_HII_bacteria_HII_like"/>
    <property type="match status" value="1"/>
</dbReference>
<dbReference type="FunFam" id="3.30.420.10:FF:000006">
    <property type="entry name" value="Ribonuclease HII"/>
    <property type="match status" value="1"/>
</dbReference>
<dbReference type="Gene3D" id="3.30.420.10">
    <property type="entry name" value="Ribonuclease H-like superfamily/Ribonuclease H"/>
    <property type="match status" value="1"/>
</dbReference>
<dbReference type="HAMAP" id="MF_00052_B">
    <property type="entry name" value="RNase_HII_B"/>
    <property type="match status" value="1"/>
</dbReference>
<dbReference type="InterPro" id="IPR022898">
    <property type="entry name" value="RNase_HII"/>
</dbReference>
<dbReference type="InterPro" id="IPR001352">
    <property type="entry name" value="RNase_HII/HIII"/>
</dbReference>
<dbReference type="InterPro" id="IPR024567">
    <property type="entry name" value="RNase_HII/HIII_dom"/>
</dbReference>
<dbReference type="InterPro" id="IPR012337">
    <property type="entry name" value="RNaseH-like_sf"/>
</dbReference>
<dbReference type="InterPro" id="IPR036397">
    <property type="entry name" value="RNaseH_sf"/>
</dbReference>
<dbReference type="NCBIfam" id="NF000595">
    <property type="entry name" value="PRK00015.1-3"/>
    <property type="match status" value="1"/>
</dbReference>
<dbReference type="NCBIfam" id="NF000596">
    <property type="entry name" value="PRK00015.1-4"/>
    <property type="match status" value="1"/>
</dbReference>
<dbReference type="PANTHER" id="PTHR10954">
    <property type="entry name" value="RIBONUCLEASE H2 SUBUNIT A"/>
    <property type="match status" value="1"/>
</dbReference>
<dbReference type="PANTHER" id="PTHR10954:SF18">
    <property type="entry name" value="RIBONUCLEASE HII"/>
    <property type="match status" value="1"/>
</dbReference>
<dbReference type="Pfam" id="PF01351">
    <property type="entry name" value="RNase_HII"/>
    <property type="match status" value="1"/>
</dbReference>
<dbReference type="SUPFAM" id="SSF53098">
    <property type="entry name" value="Ribonuclease H-like"/>
    <property type="match status" value="1"/>
</dbReference>
<dbReference type="PROSITE" id="PS51975">
    <property type="entry name" value="RNASE_H_2"/>
    <property type="match status" value="1"/>
</dbReference>
<comment type="function">
    <text evidence="1">Endonuclease that specifically degrades the RNA of RNA-DNA hybrids.</text>
</comment>
<comment type="catalytic activity">
    <reaction evidence="1">
        <text>Endonucleolytic cleavage to 5'-phosphomonoester.</text>
        <dbReference type="EC" id="3.1.26.4"/>
    </reaction>
</comment>
<comment type="cofactor">
    <cofactor evidence="1">
        <name>Mn(2+)</name>
        <dbReference type="ChEBI" id="CHEBI:29035"/>
    </cofactor>
    <cofactor evidence="1">
        <name>Mg(2+)</name>
        <dbReference type="ChEBI" id="CHEBI:18420"/>
    </cofactor>
    <text evidence="1">Manganese or magnesium. Binds 1 divalent metal ion per monomer in the absence of substrate. May bind a second metal ion after substrate binding.</text>
</comment>
<comment type="subcellular location">
    <subcellularLocation>
        <location evidence="1">Cytoplasm</location>
    </subcellularLocation>
</comment>
<comment type="similarity">
    <text evidence="1">Belongs to the RNase HII family.</text>
</comment>
<accession>Q7WJ80</accession>
<gene>
    <name evidence="1" type="primary">rnhB</name>
    <name type="ordered locus">BB2619</name>
</gene>
<feature type="chain" id="PRO_0000111544" description="Ribonuclease HII">
    <location>
        <begin position="1"/>
        <end position="201"/>
    </location>
</feature>
<feature type="domain" description="RNase H type-2" evidence="2">
    <location>
        <begin position="15"/>
        <end position="201"/>
    </location>
</feature>
<feature type="binding site" evidence="1">
    <location>
        <position position="21"/>
    </location>
    <ligand>
        <name>a divalent metal cation</name>
        <dbReference type="ChEBI" id="CHEBI:60240"/>
    </ligand>
</feature>
<feature type="binding site" evidence="1">
    <location>
        <position position="22"/>
    </location>
    <ligand>
        <name>a divalent metal cation</name>
        <dbReference type="ChEBI" id="CHEBI:60240"/>
    </ligand>
</feature>
<feature type="binding site" evidence="1">
    <location>
        <position position="113"/>
    </location>
    <ligand>
        <name>a divalent metal cation</name>
        <dbReference type="ChEBI" id="CHEBI:60240"/>
    </ligand>
</feature>
<proteinExistence type="inferred from homology"/>
<evidence type="ECO:0000255" key="1">
    <source>
        <dbReference type="HAMAP-Rule" id="MF_00052"/>
    </source>
</evidence>
<evidence type="ECO:0000255" key="2">
    <source>
        <dbReference type="PROSITE-ProRule" id="PRU01319"/>
    </source>
</evidence>
<sequence>MEQPDLFGTLAPLPAIIAGVDEAGRGPLAGAVYAAAVILDPDRPVDGLADSKVLKAEQREALAVQIRAQALAWFVASASVQEIDSLNILRATMLAMQRAVAGLAMAPELAMVDGNQAPKLRCAVQTVIKGDALVPAISAASILAKTARDADLLRLHALYPQYGFDQHKGYGTPQHLSLLREHGPCPEHRRSFAPIKAYGAP</sequence>
<keyword id="KW-0963">Cytoplasm</keyword>
<keyword id="KW-0255">Endonuclease</keyword>
<keyword id="KW-0378">Hydrolase</keyword>
<keyword id="KW-0464">Manganese</keyword>
<keyword id="KW-0479">Metal-binding</keyword>
<keyword id="KW-0540">Nuclease</keyword>